<evidence type="ECO:0000255" key="1">
    <source>
        <dbReference type="HAMAP-Rule" id="MF_01003"/>
    </source>
</evidence>
<sequence length="450" mass="51517">MSLLQFSGLFVVWLLCTLFIATLTWFEFRRVRFNFNVFFSLLFLLTFFFGFPLTSVLVFRFDVGVAPPEILLQALLSAGCFYAVYYVTYKTRLRKRVADVPRRPLFTMNRVETNLTWVILMGVALVSVGIFFMHNGFLLFRLNSYSQIFSSEVSGVALKRFFYFFIPAMLVVYFLRQDSKAWLFFLVSTVAFGLLTYMIVGGTRANIIIAFAIFLFIGIIRGWISLWMLAAAGVLGIVGMFWLALKRYGMNVSGDEAFYTFLYLTRDTFSPWENLALLLQNYDNIDFQGLAPIVRDFYVFIPSWLWPGRPSMVLNTANYFTWEVLNNHSGLAISPTLIGSLVVMGGALFIPLGAIVVGLIIKWFDWLYELGNREPNRYKAAILHSFCFGAIFNMIVLAREGLDSFVSRVVFFIVVFGACLMIAKLLYWLFESAGLIHKRTKSSLRTQVEG</sequence>
<name>WZYE_ECOLU</name>
<reference key="1">
    <citation type="journal article" date="2009" name="PLoS Genet.">
        <title>Organised genome dynamics in the Escherichia coli species results in highly diverse adaptive paths.</title>
        <authorList>
            <person name="Touchon M."/>
            <person name="Hoede C."/>
            <person name="Tenaillon O."/>
            <person name="Barbe V."/>
            <person name="Baeriswyl S."/>
            <person name="Bidet P."/>
            <person name="Bingen E."/>
            <person name="Bonacorsi S."/>
            <person name="Bouchier C."/>
            <person name="Bouvet O."/>
            <person name="Calteau A."/>
            <person name="Chiapello H."/>
            <person name="Clermont O."/>
            <person name="Cruveiller S."/>
            <person name="Danchin A."/>
            <person name="Diard M."/>
            <person name="Dossat C."/>
            <person name="Karoui M.E."/>
            <person name="Frapy E."/>
            <person name="Garry L."/>
            <person name="Ghigo J.M."/>
            <person name="Gilles A.M."/>
            <person name="Johnson J."/>
            <person name="Le Bouguenec C."/>
            <person name="Lescat M."/>
            <person name="Mangenot S."/>
            <person name="Martinez-Jehanne V."/>
            <person name="Matic I."/>
            <person name="Nassif X."/>
            <person name="Oztas S."/>
            <person name="Petit M.A."/>
            <person name="Pichon C."/>
            <person name="Rouy Z."/>
            <person name="Ruf C.S."/>
            <person name="Schneider D."/>
            <person name="Tourret J."/>
            <person name="Vacherie B."/>
            <person name="Vallenet D."/>
            <person name="Medigue C."/>
            <person name="Rocha E.P.C."/>
            <person name="Denamur E."/>
        </authorList>
    </citation>
    <scope>NUCLEOTIDE SEQUENCE [LARGE SCALE GENOMIC DNA]</scope>
    <source>
        <strain>UMN026 / ExPEC</strain>
    </source>
</reference>
<dbReference type="EMBL" id="CU928163">
    <property type="protein sequence ID" value="CAR15454.1"/>
    <property type="molecule type" value="Genomic_DNA"/>
</dbReference>
<dbReference type="RefSeq" id="WP_000055143.1">
    <property type="nucleotide sequence ID" value="NC_011751.1"/>
</dbReference>
<dbReference type="RefSeq" id="YP_002414950.1">
    <property type="nucleotide sequence ID" value="NC_011751.1"/>
</dbReference>
<dbReference type="STRING" id="585056.ECUMN_4319"/>
<dbReference type="KEGG" id="eum:ECUMN_4319"/>
<dbReference type="PATRIC" id="fig|585056.7.peg.4485"/>
<dbReference type="HOGENOM" id="CLU_049711_0_0_6"/>
<dbReference type="UniPathway" id="UPA00566"/>
<dbReference type="Proteomes" id="UP000007097">
    <property type="component" value="Chromosome"/>
</dbReference>
<dbReference type="GO" id="GO:0005886">
    <property type="term" value="C:plasma membrane"/>
    <property type="evidence" value="ECO:0007669"/>
    <property type="project" value="UniProtKB-SubCell"/>
</dbReference>
<dbReference type="GO" id="GO:0009246">
    <property type="term" value="P:enterobacterial common antigen biosynthetic process"/>
    <property type="evidence" value="ECO:0007669"/>
    <property type="project" value="UniProtKB-UniRule"/>
</dbReference>
<dbReference type="HAMAP" id="MF_01003">
    <property type="entry name" value="WzyE"/>
    <property type="match status" value="1"/>
</dbReference>
<dbReference type="InterPro" id="IPR010691">
    <property type="entry name" value="WzyE"/>
</dbReference>
<dbReference type="NCBIfam" id="NF002820">
    <property type="entry name" value="PRK02975.1"/>
    <property type="match status" value="1"/>
</dbReference>
<dbReference type="Pfam" id="PF06899">
    <property type="entry name" value="WzyE"/>
    <property type="match status" value="1"/>
</dbReference>
<gene>
    <name evidence="1" type="primary">wzyE</name>
    <name type="ordered locus">ECUMN_4319</name>
</gene>
<protein>
    <recommendedName>
        <fullName evidence="1">Probable ECA polymerase</fullName>
    </recommendedName>
</protein>
<proteinExistence type="inferred from homology"/>
<feature type="chain" id="PRO_1000200207" description="Probable ECA polymerase">
    <location>
        <begin position="1"/>
        <end position="450"/>
    </location>
</feature>
<feature type="transmembrane region" description="Helical" evidence="1">
    <location>
        <begin position="6"/>
        <end position="26"/>
    </location>
</feature>
<feature type="transmembrane region" description="Helical" evidence="1">
    <location>
        <begin position="37"/>
        <end position="57"/>
    </location>
</feature>
<feature type="transmembrane region" description="Helical" evidence="1">
    <location>
        <begin position="63"/>
        <end position="83"/>
    </location>
</feature>
<feature type="transmembrane region" description="Helical" evidence="1">
    <location>
        <begin position="118"/>
        <end position="138"/>
    </location>
</feature>
<feature type="transmembrane region" description="Helical" evidence="1">
    <location>
        <begin position="155"/>
        <end position="175"/>
    </location>
</feature>
<feature type="transmembrane region" description="Helical" evidence="1">
    <location>
        <begin position="181"/>
        <end position="201"/>
    </location>
</feature>
<feature type="transmembrane region" description="Helical" evidence="1">
    <location>
        <begin position="207"/>
        <end position="227"/>
    </location>
</feature>
<feature type="transmembrane region" description="Helical" evidence="1">
    <location>
        <begin position="228"/>
        <end position="248"/>
    </location>
</feature>
<feature type="transmembrane region" description="Helical" evidence="1">
    <location>
        <begin position="341"/>
        <end position="361"/>
    </location>
</feature>
<feature type="transmembrane region" description="Helical" evidence="1">
    <location>
        <begin position="378"/>
        <end position="398"/>
    </location>
</feature>
<feature type="transmembrane region" description="Helical" evidence="1">
    <location>
        <begin position="410"/>
        <end position="430"/>
    </location>
</feature>
<accession>B7NF99</accession>
<organism>
    <name type="scientific">Escherichia coli O17:K52:H18 (strain UMN026 / ExPEC)</name>
    <dbReference type="NCBI Taxonomy" id="585056"/>
    <lineage>
        <taxon>Bacteria</taxon>
        <taxon>Pseudomonadati</taxon>
        <taxon>Pseudomonadota</taxon>
        <taxon>Gammaproteobacteria</taxon>
        <taxon>Enterobacterales</taxon>
        <taxon>Enterobacteriaceae</taxon>
        <taxon>Escherichia</taxon>
    </lineage>
</organism>
<keyword id="KW-0997">Cell inner membrane</keyword>
<keyword id="KW-1003">Cell membrane</keyword>
<keyword id="KW-0472">Membrane</keyword>
<keyword id="KW-0812">Transmembrane</keyword>
<keyword id="KW-1133">Transmembrane helix</keyword>
<comment type="function">
    <text evidence="1">Probably involved in the polymerization of enterobacterial common antigen (ECA) trisaccharide repeat units.</text>
</comment>
<comment type="pathway">
    <text evidence="1">Bacterial outer membrane biogenesis; enterobacterial common antigen biosynthesis.</text>
</comment>
<comment type="subunit">
    <text evidence="1">Probably part of a complex composed of WzxE, WzyE and WzzE.</text>
</comment>
<comment type="subcellular location">
    <subcellularLocation>
        <location evidence="1">Cell inner membrane</location>
        <topology evidence="1">Multi-pass membrane protein</topology>
    </subcellularLocation>
</comment>
<comment type="similarity">
    <text evidence="1">Belongs to the WzyE family.</text>
</comment>